<organism>
    <name type="scientific">Rattus norvegicus</name>
    <name type="common">Rat</name>
    <dbReference type="NCBI Taxonomy" id="10116"/>
    <lineage>
        <taxon>Eukaryota</taxon>
        <taxon>Metazoa</taxon>
        <taxon>Chordata</taxon>
        <taxon>Craniata</taxon>
        <taxon>Vertebrata</taxon>
        <taxon>Euteleostomi</taxon>
        <taxon>Mammalia</taxon>
        <taxon>Eutheria</taxon>
        <taxon>Euarchontoglires</taxon>
        <taxon>Glires</taxon>
        <taxon>Rodentia</taxon>
        <taxon>Myomorpha</taxon>
        <taxon>Muroidea</taxon>
        <taxon>Muridae</taxon>
        <taxon>Murinae</taxon>
        <taxon>Rattus</taxon>
    </lineage>
</organism>
<proteinExistence type="evidence at protein level"/>
<protein>
    <recommendedName>
        <fullName>SWI/SNF-related matrix-associated actin-dependent regulator of chromatin subfamily A member 4</fullName>
        <shortName>SMARCA4</shortName>
        <ecNumber evidence="2">3.6.4.-</ecNumber>
    </recommendedName>
    <alternativeName>
        <fullName>BRG1-associated factor 190A</fullName>
        <shortName>BAF190A</shortName>
    </alternativeName>
    <alternativeName>
        <fullName>Protein brahma homolog 1</fullName>
    </alternativeName>
    <alternativeName>
        <fullName>SNF2-beta</fullName>
    </alternativeName>
    <alternativeName>
        <fullName evidence="12 13">Transcription activator BRG1</fullName>
    </alternativeName>
</protein>
<name>SMCA4_RAT</name>
<reference key="1">
    <citation type="submission" date="2002-08" db="EMBL/GenBank/DDBJ databases">
        <title>Isolation and characterization of the rat brahma related gene-1 (BRG-1).</title>
        <authorList>
            <person name="Hirsch O."/>
            <person name="Almeida O.F.X."/>
        </authorList>
    </citation>
    <scope>NUCLEOTIDE SEQUENCE [MRNA]</scope>
    <source>
        <strain>Wistar</strain>
        <tissue>Hippocampus</tissue>
    </source>
</reference>
<reference key="2">
    <citation type="journal article" date="2008" name="Neuron">
        <title>A calcium-dependent switch in a CREST-BRG1 complex regulates activity-dependent gene expression.</title>
        <authorList>
            <person name="Qiu Z."/>
            <person name="Ghosh A."/>
        </authorList>
    </citation>
    <scope>FUNCTION</scope>
    <scope>INTERACTION WITH SS18L1; HDAC1; RB1 AND SP1</scope>
</reference>
<reference key="3">
    <citation type="journal article" date="2012" name="Nat. Commun.">
        <title>Quantitative maps of protein phosphorylation sites across 14 different rat organs and tissues.</title>
        <authorList>
            <person name="Lundby A."/>
            <person name="Secher A."/>
            <person name="Lage K."/>
            <person name="Nordsborg N.B."/>
            <person name="Dmytriyev A."/>
            <person name="Lundby C."/>
            <person name="Olsen J.V."/>
        </authorList>
    </citation>
    <scope>PHOSPHORYLATION [LARGE SCALE ANALYSIS] AT SER-613; SER-695; SER-699; SER-1419; SER-1536; SER-1541; SER-1552; SER-1593 AND SER-1597</scope>
    <scope>IDENTIFICATION BY MASS SPECTROMETRY [LARGE SCALE ANALYSIS]</scope>
</reference>
<feature type="chain" id="PRO_0000391344" description="SWI/SNF-related matrix-associated actin-dependent regulator of chromatin subfamily A member 4">
    <location>
        <begin position="1"/>
        <end position="1613"/>
    </location>
</feature>
<feature type="domain" description="QLQ" evidence="9">
    <location>
        <begin position="171"/>
        <end position="206"/>
    </location>
</feature>
<feature type="domain" description="HSA" evidence="8">
    <location>
        <begin position="460"/>
        <end position="532"/>
    </location>
</feature>
<feature type="domain" description="Helicase ATP-binding" evidence="6">
    <location>
        <begin position="766"/>
        <end position="931"/>
    </location>
</feature>
<feature type="domain" description="Helicase C-terminal" evidence="7">
    <location>
        <begin position="1084"/>
        <end position="1246"/>
    </location>
</feature>
<feature type="domain" description="Bromo" evidence="5">
    <location>
        <begin position="1420"/>
        <end position="1530"/>
    </location>
</feature>
<feature type="region of interest" description="Necessary for interaction with SS18L1/CREST" evidence="11">
    <location>
        <begin position="1"/>
        <end position="282"/>
    </location>
</feature>
<feature type="region of interest" description="Disordered" evidence="10">
    <location>
        <begin position="1"/>
        <end position="177"/>
    </location>
</feature>
<feature type="region of interest" description="Disordered" evidence="10">
    <location>
        <begin position="198"/>
        <end position="351"/>
    </location>
</feature>
<feature type="region of interest" description="RNA-binding region which is sufficient for binding to lncRNA Evf2" evidence="3">
    <location>
        <begin position="462"/>
        <end position="728"/>
    </location>
</feature>
<feature type="region of interest" description="Disordered" evidence="10">
    <location>
        <begin position="577"/>
        <end position="610"/>
    </location>
</feature>
<feature type="region of interest" description="Disordered" evidence="10">
    <location>
        <begin position="647"/>
        <end position="699"/>
    </location>
</feature>
<feature type="region of interest" description="Sufficient for interaction with DLX1" evidence="3">
    <location>
        <begin position="837"/>
        <end position="916"/>
    </location>
</feature>
<feature type="region of interest" description="Sufficient for interaction with DLX1" evidence="3">
    <location>
        <begin position="1247"/>
        <end position="1413"/>
    </location>
</feature>
<feature type="region of interest" description="Disordered" evidence="10">
    <location>
        <begin position="1366"/>
        <end position="1427"/>
    </location>
</feature>
<feature type="region of interest" description="Disordered" evidence="10">
    <location>
        <begin position="1530"/>
        <end position="1613"/>
    </location>
</feature>
<feature type="short sequence motif" description="DEGH box" evidence="1">
    <location>
        <begin position="881"/>
        <end position="884"/>
    </location>
</feature>
<feature type="short sequence motif" description="KIKL" evidence="2">
    <location>
        <begin position="1562"/>
        <end position="1565"/>
    </location>
</feature>
<feature type="compositionally biased region" description="Pro residues" evidence="10">
    <location>
        <begin position="1"/>
        <end position="23"/>
    </location>
</feature>
<feature type="compositionally biased region" description="Low complexity" evidence="10">
    <location>
        <begin position="24"/>
        <end position="45"/>
    </location>
</feature>
<feature type="compositionally biased region" description="Basic and acidic residues" evidence="10">
    <location>
        <begin position="74"/>
        <end position="89"/>
    </location>
</feature>
<feature type="compositionally biased region" description="Low complexity" evidence="10">
    <location>
        <begin position="130"/>
        <end position="147"/>
    </location>
</feature>
<feature type="compositionally biased region" description="Polar residues" evidence="10">
    <location>
        <begin position="162"/>
        <end position="177"/>
    </location>
</feature>
<feature type="compositionally biased region" description="Pro residues" evidence="10">
    <location>
        <begin position="231"/>
        <end position="249"/>
    </location>
</feature>
<feature type="compositionally biased region" description="Pro residues" evidence="10">
    <location>
        <begin position="259"/>
        <end position="286"/>
    </location>
</feature>
<feature type="compositionally biased region" description="Pro residues" evidence="10">
    <location>
        <begin position="302"/>
        <end position="327"/>
    </location>
</feature>
<feature type="compositionally biased region" description="Basic residues" evidence="10">
    <location>
        <begin position="579"/>
        <end position="588"/>
    </location>
</feature>
<feature type="compositionally biased region" description="Acidic residues" evidence="10">
    <location>
        <begin position="658"/>
        <end position="673"/>
    </location>
</feature>
<feature type="compositionally biased region" description="Basic and acidic residues" evidence="10">
    <location>
        <begin position="1396"/>
        <end position="1405"/>
    </location>
</feature>
<feature type="compositionally biased region" description="Acidic residues" evidence="10">
    <location>
        <begin position="1533"/>
        <end position="1553"/>
    </location>
</feature>
<feature type="compositionally biased region" description="Basic and acidic residues" evidence="10">
    <location>
        <begin position="1566"/>
        <end position="1576"/>
    </location>
</feature>
<feature type="compositionally biased region" description="Basic residues" evidence="10">
    <location>
        <begin position="1577"/>
        <end position="1587"/>
    </location>
</feature>
<feature type="compositionally biased region" description="Acidic residues" evidence="10">
    <location>
        <begin position="1593"/>
        <end position="1603"/>
    </location>
</feature>
<feature type="binding site" evidence="6">
    <location>
        <begin position="779"/>
        <end position="786"/>
    </location>
    <ligand>
        <name>ATP</name>
        <dbReference type="ChEBI" id="CHEBI:30616"/>
    </ligand>
</feature>
<feature type="site" description="Required for binding to 'Lys-15'-acetylated histone 3" evidence="1">
    <location>
        <begin position="1505"/>
        <end position="1506"/>
    </location>
</feature>
<feature type="modified residue" description="Phosphothreonine" evidence="2">
    <location>
        <position position="11"/>
    </location>
</feature>
<feature type="modified residue" description="N6-acetyllysine" evidence="2">
    <location>
        <position position="188"/>
    </location>
</feature>
<feature type="modified residue" description="Phosphothreonine" evidence="2">
    <location>
        <position position="353"/>
    </location>
</feature>
<feature type="modified residue" description="Phosphothreonine" evidence="2">
    <location>
        <position position="609"/>
    </location>
</feature>
<feature type="modified residue" description="Phosphoserine" evidence="2">
    <location>
        <position position="610"/>
    </location>
</feature>
<feature type="modified residue" description="Phosphoserine" evidence="15">
    <location>
        <position position="613"/>
    </location>
</feature>
<feature type="modified residue" description="N6-acetyllysine" evidence="4">
    <location>
        <position position="626"/>
    </location>
</feature>
<feature type="modified residue" description="Phosphoserine" evidence="15">
    <location>
        <position position="695"/>
    </location>
</feature>
<feature type="modified residue" description="Phosphoserine" evidence="15">
    <location>
        <position position="699"/>
    </location>
</feature>
<feature type="modified residue" description="Phosphoserine" evidence="2">
    <location>
        <position position="1349"/>
    </location>
</feature>
<feature type="modified residue" description="Phosphothreonine" evidence="3">
    <location>
        <position position="1390"/>
    </location>
</feature>
<feature type="modified residue" description="Phosphoserine" evidence="15">
    <location>
        <position position="1419"/>
    </location>
</feature>
<feature type="modified residue" description="Phosphoserine" evidence="15">
    <location>
        <position position="1536"/>
    </location>
</feature>
<feature type="modified residue" description="Phosphoserine" evidence="15">
    <location>
        <position position="1541"/>
    </location>
</feature>
<feature type="modified residue" description="Phosphoserine" evidence="15">
    <location>
        <position position="1552"/>
    </location>
</feature>
<feature type="modified residue" description="Phosphoserine" evidence="15">
    <location>
        <position position="1593"/>
    </location>
</feature>
<feature type="modified residue" description="Phosphoserine" evidence="15">
    <location>
        <position position="1597"/>
    </location>
</feature>
<feature type="cross-link" description="Glycyl lysine isopeptide (Lys-Gly) (interchain with G-Cter in SUMO2)" evidence="2">
    <location>
        <position position="1332"/>
    </location>
</feature>
<keyword id="KW-0007">Acetylation</keyword>
<keyword id="KW-0010">Activator</keyword>
<keyword id="KW-0103">Bromodomain</keyword>
<keyword id="KW-0156">Chromatin regulator</keyword>
<keyword id="KW-0378">Hydrolase</keyword>
<keyword id="KW-1017">Isopeptide bond</keyword>
<keyword id="KW-0524">Neurogenesis</keyword>
<keyword id="KW-0539">Nucleus</keyword>
<keyword id="KW-0597">Phosphoprotein</keyword>
<keyword id="KW-1185">Reference proteome</keyword>
<keyword id="KW-0678">Repressor</keyword>
<keyword id="KW-0694">RNA-binding</keyword>
<keyword id="KW-0804">Transcription</keyword>
<keyword id="KW-0805">Transcription regulation</keyword>
<keyword id="KW-0832">Ubl conjugation</keyword>
<sequence length="1613" mass="181427">MSTPDPPLGGTPRPGPSPGPGPSPGAMLGPSPGPSPGSAHSMMGPSPGPPSAGHPMPTQGPGGYPQDNMHQMHKPMESMHEKGMPDDPRYNQMKGMGMRSGAHTGMGPPPSPMDQHSQGYPSPLGGSEHASSPVPASGPSSGPQMSSGPGGAPLDGSDPQALGQQNRGPTPFNQNQLHQLRAQIMAYKMLARGQPLPDHLQMAVQGKRPMPGMQQQMPTLPPPSVSATGPGPGPGPGPGPGPGPAPPNYSRPHGMGGPNMPPPGPSGVPPGMPGQPPGGPPKPWPEGPMANAAAPTSTPQKLIPPQPTGRPSPAPPAVPPAASPVMPPQTQSPGQPAQPAPLVPLHQKQSRITPIQKPRGLDPVEILQEREYRLQARIVHRIQELENLPGSLAGDLRTKATIELKALRLLNFQRQLRQEVVVCMRRDTALETALNAKAYKRSKRQSLREARITEKLEKQQKIEQERKRRQKHQEYLNSILQHAKDFREYHRSVTGKLQKLTKAVATYHANTEREQKKENERIEKERMRRLMAEDEEGYRKLIDQKKDKRLAYLLQQTDEYVANLTELVRQHKAAQVAKEKKKKKKKKKAENAEGQTPAIGPDGEPLDETSQMSDLPVKVIHVESGKILTGTDAPKAGQLEAWLEMNPGYEVAPRSDSEESGSEEEEEEEEEEQPQPAQPPTLPVEEKKKIPDPDSDDVSEVDARHIIENAKQDVDDEYGVSQALARGLQSYYAVAHAVTERVDKQSALMVNGVLKQYQIKGLEWLVSLYNNNLNGILADEMGLGKTIQTIALITYLMEHKRINGPFLIIVPLSTLSNWAYEFDKWAPSVVKVSYKGSPAARRAFVPQLRSGKFNVLLTTYEYIIKDKHILAKIRWKYMIVDEGHRMKNHHCKLTQVLNTHYVAPRRLLLTGTPLQNKLPELWALLNFLLPTIFKSCSTFEQWFNAPFAMTGEKVDLNEEETILIIRRLHKVLRPFLLRRLKKEVEAQLPEKVEYVIKCDMSALQRVLYRHMQAKGVLLTDGSEKDKKGKGGTKTLMNTIMQLRKICNHPYMFQHIEESFSEHLGFTGGIVQGLDLYRASGKFELLDRILPKLRATNHKVLLFCQMTSLMTIMEDYFAYRGFKYLRLDGTTKAEDRGMLLKTFNEPGSEYFIFLLSTRAGGLGLNLQSADTVIIFDSDWNPHQDLQAQDRAHRIGQQNEVRVLRLCTVNSVEEKILAAAKYKLNVDQKVIQAGMFDQKSSSHERRAFLQAILEHEEQDEEEDEVPDDETVNQMIARHEEEFDLFMRMDLDRRREEARNPKRKPRLMEEDELPSWIIKDDAEVERLTCEEEEEKMFGRGSRHRKEVDYSDSLTEKQWLKAIEEGTLEEIEEEVRQKKSSRKRKRDSEAGSSTPTTSTRSRDKDEESKKQKKRGRPPAEKLSPNPPNLTKKMKKIVDAVIKYKDSSGRQLSEVFIQLPSRKELPEYYELIRKPVDFKKIKERIRNHKYRSLNDLEKDVMLLCQNAQTFNLEGSLIYEDSIVLQSVFTSVRQKIEKEDDSEGEESEEEEEGEEEGSESESRSVKVKIKLGRKEKAQDRLKGGRRRPSRGSRAKPVVSDDDSDEEQEEDRSGSGSEED</sequence>
<dbReference type="EC" id="3.6.4.-" evidence="2"/>
<dbReference type="EMBL" id="AJ504723">
    <property type="protein sequence ID" value="CAD43278.1"/>
    <property type="molecule type" value="mRNA"/>
</dbReference>
<dbReference type="SMR" id="Q8K1P7"/>
<dbReference type="FunCoup" id="Q8K1P7">
    <property type="interactions" value="2981"/>
</dbReference>
<dbReference type="IntAct" id="Q8K1P7">
    <property type="interactions" value="4"/>
</dbReference>
<dbReference type="STRING" id="10116.ENSRNOP00000013166"/>
<dbReference type="GlyGen" id="Q8K1P7">
    <property type="glycosylation" value="1 site"/>
</dbReference>
<dbReference type="iPTMnet" id="Q8K1P7"/>
<dbReference type="PhosphoSitePlus" id="Q8K1P7"/>
<dbReference type="jPOST" id="Q8K1P7"/>
<dbReference type="PaxDb" id="10116-ENSRNOP00000013166"/>
<dbReference type="UCSC" id="RGD:621728">
    <property type="organism name" value="rat"/>
</dbReference>
<dbReference type="AGR" id="RGD:621728"/>
<dbReference type="RGD" id="621728">
    <property type="gene designation" value="Smarca4"/>
</dbReference>
<dbReference type="eggNOG" id="KOG0386">
    <property type="taxonomic scope" value="Eukaryota"/>
</dbReference>
<dbReference type="InParanoid" id="Q8K1P7"/>
<dbReference type="PhylomeDB" id="Q8K1P7"/>
<dbReference type="Reactome" id="R-RNO-1266695">
    <property type="pathway name" value="Interleukin-7 signaling"/>
</dbReference>
<dbReference type="Reactome" id="R-RNO-201722">
    <property type="pathway name" value="Formation of the beta-catenin:TCF transactivating complex"/>
</dbReference>
<dbReference type="Reactome" id="R-RNO-3214858">
    <property type="pathway name" value="RMTs methylate histone arginines"/>
</dbReference>
<dbReference type="Reactome" id="R-RNO-3247509">
    <property type="pathway name" value="Chromatin modifying enzymes"/>
</dbReference>
<dbReference type="Reactome" id="R-RNO-8939243">
    <property type="pathway name" value="RUNX1 interacts with co-factors whose precise effect on RUNX1 targets is not known"/>
</dbReference>
<dbReference type="PRO" id="PR:Q8K1P7"/>
<dbReference type="Proteomes" id="UP000002494">
    <property type="component" value="Unplaced"/>
</dbReference>
<dbReference type="GO" id="GO:0000785">
    <property type="term" value="C:chromatin"/>
    <property type="evidence" value="ECO:0000266"/>
    <property type="project" value="RGD"/>
</dbReference>
<dbReference type="GO" id="GO:0000791">
    <property type="term" value="C:euchromatin"/>
    <property type="evidence" value="ECO:0000266"/>
    <property type="project" value="RGD"/>
</dbReference>
<dbReference type="GO" id="GO:0001673">
    <property type="term" value="C:male germ cell nucleus"/>
    <property type="evidence" value="ECO:0000266"/>
    <property type="project" value="RGD"/>
</dbReference>
<dbReference type="GO" id="GO:0071565">
    <property type="term" value="C:nBAF complex"/>
    <property type="evidence" value="ECO:0000250"/>
    <property type="project" value="UniProtKB"/>
</dbReference>
<dbReference type="GO" id="GO:0071564">
    <property type="term" value="C:npBAF complex"/>
    <property type="evidence" value="ECO:0000250"/>
    <property type="project" value="UniProtKB"/>
</dbReference>
<dbReference type="GO" id="GO:0005730">
    <property type="term" value="C:nucleolus"/>
    <property type="evidence" value="ECO:0000266"/>
    <property type="project" value="RGD"/>
</dbReference>
<dbReference type="GO" id="GO:0005654">
    <property type="term" value="C:nucleoplasm"/>
    <property type="evidence" value="ECO:0000304"/>
    <property type="project" value="Reactome"/>
</dbReference>
<dbReference type="GO" id="GO:0005634">
    <property type="term" value="C:nucleus"/>
    <property type="evidence" value="ECO:0000266"/>
    <property type="project" value="RGD"/>
</dbReference>
<dbReference type="GO" id="GO:0005726">
    <property type="term" value="C:perichromatin fibrils"/>
    <property type="evidence" value="ECO:0000266"/>
    <property type="project" value="RGD"/>
</dbReference>
<dbReference type="GO" id="GO:0016514">
    <property type="term" value="C:SWI/SNF complex"/>
    <property type="evidence" value="ECO:0000314"/>
    <property type="project" value="RGD"/>
</dbReference>
<dbReference type="GO" id="GO:0005524">
    <property type="term" value="F:ATP binding"/>
    <property type="evidence" value="ECO:0007669"/>
    <property type="project" value="UniProtKB-KW"/>
</dbReference>
<dbReference type="GO" id="GO:0016887">
    <property type="term" value="F:ATP hydrolysis activity"/>
    <property type="evidence" value="ECO:0000266"/>
    <property type="project" value="RGD"/>
</dbReference>
<dbReference type="GO" id="GO:0008094">
    <property type="term" value="F:ATP-dependent activity, acting on DNA"/>
    <property type="evidence" value="ECO:0000266"/>
    <property type="project" value="RGD"/>
</dbReference>
<dbReference type="GO" id="GO:0140658">
    <property type="term" value="F:ATP-dependent chromatin remodeler activity"/>
    <property type="evidence" value="ECO:0000266"/>
    <property type="project" value="RGD"/>
</dbReference>
<dbReference type="GO" id="GO:0003682">
    <property type="term" value="F:chromatin binding"/>
    <property type="evidence" value="ECO:0000314"/>
    <property type="project" value="RGD"/>
</dbReference>
<dbReference type="GO" id="GO:0003677">
    <property type="term" value="F:DNA binding"/>
    <property type="evidence" value="ECO:0000318"/>
    <property type="project" value="GO_Central"/>
</dbReference>
<dbReference type="GO" id="GO:0070182">
    <property type="term" value="F:DNA polymerase binding"/>
    <property type="evidence" value="ECO:0000266"/>
    <property type="project" value="RGD"/>
</dbReference>
<dbReference type="GO" id="GO:0004386">
    <property type="term" value="F:helicase activity"/>
    <property type="evidence" value="ECO:0007669"/>
    <property type="project" value="UniProtKB-KW"/>
</dbReference>
<dbReference type="GO" id="GO:0042393">
    <property type="term" value="F:histone binding"/>
    <property type="evidence" value="ECO:0007669"/>
    <property type="project" value="InterPro"/>
</dbReference>
<dbReference type="GO" id="GO:0106222">
    <property type="term" value="F:lncRNA binding"/>
    <property type="evidence" value="ECO:0000266"/>
    <property type="project" value="RGD"/>
</dbReference>
<dbReference type="GO" id="GO:0050681">
    <property type="term" value="F:nuclear androgen receptor binding"/>
    <property type="evidence" value="ECO:0000266"/>
    <property type="project" value="RGD"/>
</dbReference>
<dbReference type="GO" id="GO:0140750">
    <property type="term" value="F:nucleosome array spacer activity"/>
    <property type="evidence" value="ECO:0000318"/>
    <property type="project" value="GO_Central"/>
</dbReference>
<dbReference type="GO" id="GO:0002039">
    <property type="term" value="F:p53 binding"/>
    <property type="evidence" value="ECO:0000266"/>
    <property type="project" value="RGD"/>
</dbReference>
<dbReference type="GO" id="GO:0044877">
    <property type="term" value="F:protein-containing complex binding"/>
    <property type="evidence" value="ECO:0000314"/>
    <property type="project" value="RGD"/>
</dbReference>
<dbReference type="GO" id="GO:0000978">
    <property type="term" value="F:RNA polymerase II cis-regulatory region sequence-specific DNA binding"/>
    <property type="evidence" value="ECO:0000266"/>
    <property type="project" value="RGD"/>
</dbReference>
<dbReference type="GO" id="GO:0000977">
    <property type="term" value="F:RNA polymerase II transcription regulatory region sequence-specific DNA binding"/>
    <property type="evidence" value="ECO:0000266"/>
    <property type="project" value="RGD"/>
</dbReference>
<dbReference type="GO" id="GO:0030957">
    <property type="term" value="F:Tat protein binding"/>
    <property type="evidence" value="ECO:0000266"/>
    <property type="project" value="RGD"/>
</dbReference>
<dbReference type="GO" id="GO:0003713">
    <property type="term" value="F:transcription coactivator activity"/>
    <property type="evidence" value="ECO:0000266"/>
    <property type="project" value="RGD"/>
</dbReference>
<dbReference type="GO" id="GO:0001221">
    <property type="term" value="F:transcription coregulator binding"/>
    <property type="evidence" value="ECO:0000266"/>
    <property type="project" value="RGD"/>
</dbReference>
<dbReference type="GO" id="GO:0003714">
    <property type="term" value="F:transcription corepressor activity"/>
    <property type="evidence" value="ECO:0000250"/>
    <property type="project" value="UniProtKB"/>
</dbReference>
<dbReference type="GO" id="GO:0035904">
    <property type="term" value="P:aorta development"/>
    <property type="evidence" value="ECO:0000266"/>
    <property type="project" value="RGD"/>
</dbReference>
<dbReference type="GO" id="GO:0035887">
    <property type="term" value="P:aortic smooth muscle cell differentiation"/>
    <property type="evidence" value="ECO:0000266"/>
    <property type="project" value="RGD"/>
</dbReference>
<dbReference type="GO" id="GO:0001832">
    <property type="term" value="P:blastocyst growth"/>
    <property type="evidence" value="ECO:0000266"/>
    <property type="project" value="RGD"/>
</dbReference>
<dbReference type="GO" id="GO:0001835">
    <property type="term" value="P:blastocyst hatching"/>
    <property type="evidence" value="ECO:0000266"/>
    <property type="project" value="RGD"/>
</dbReference>
<dbReference type="GO" id="GO:0001568">
    <property type="term" value="P:blood vessel development"/>
    <property type="evidence" value="ECO:0000266"/>
    <property type="project" value="RGD"/>
</dbReference>
<dbReference type="GO" id="GO:0000902">
    <property type="term" value="P:cell morphogenesis"/>
    <property type="evidence" value="ECO:0000266"/>
    <property type="project" value="RGD"/>
</dbReference>
<dbReference type="GO" id="GO:0006338">
    <property type="term" value="P:chromatin remodeling"/>
    <property type="evidence" value="ECO:0000314"/>
    <property type="project" value="RGD"/>
</dbReference>
<dbReference type="GO" id="GO:0060976">
    <property type="term" value="P:coronary vasculature development"/>
    <property type="evidence" value="ECO:0000266"/>
    <property type="project" value="RGD"/>
</dbReference>
<dbReference type="GO" id="GO:0060318">
    <property type="term" value="P:definitive erythrocyte differentiation"/>
    <property type="evidence" value="ECO:0000266"/>
    <property type="project" value="RGD"/>
</dbReference>
<dbReference type="GO" id="GO:0035116">
    <property type="term" value="P:embryonic hindlimb morphogenesis"/>
    <property type="evidence" value="ECO:0000266"/>
    <property type="project" value="RGD"/>
</dbReference>
<dbReference type="GO" id="GO:0048562">
    <property type="term" value="P:embryonic organ morphogenesis"/>
    <property type="evidence" value="ECO:0000266"/>
    <property type="project" value="RGD"/>
</dbReference>
<dbReference type="GO" id="GO:0048730">
    <property type="term" value="P:epidermis morphogenesis"/>
    <property type="evidence" value="ECO:0000266"/>
    <property type="project" value="RGD"/>
</dbReference>
<dbReference type="GO" id="GO:0030198">
    <property type="term" value="P:extracellular matrix organization"/>
    <property type="evidence" value="ECO:0000266"/>
    <property type="project" value="RGD"/>
</dbReference>
<dbReference type="GO" id="GO:0030900">
    <property type="term" value="P:forebrain development"/>
    <property type="evidence" value="ECO:0000266"/>
    <property type="project" value="RGD"/>
</dbReference>
<dbReference type="GO" id="GO:0010467">
    <property type="term" value="P:gene expression"/>
    <property type="evidence" value="ECO:0000266"/>
    <property type="project" value="RGD"/>
</dbReference>
<dbReference type="GO" id="GO:0007403">
    <property type="term" value="P:glial cell fate determination"/>
    <property type="evidence" value="ECO:0000266"/>
    <property type="project" value="RGD"/>
</dbReference>
<dbReference type="GO" id="GO:0007507">
    <property type="term" value="P:heart development"/>
    <property type="evidence" value="ECO:0000266"/>
    <property type="project" value="RGD"/>
</dbReference>
<dbReference type="GO" id="GO:0060347">
    <property type="term" value="P:heart trabecula formation"/>
    <property type="evidence" value="ECO:0000266"/>
    <property type="project" value="RGD"/>
</dbReference>
<dbReference type="GO" id="GO:0030902">
    <property type="term" value="P:hindbrain development"/>
    <property type="evidence" value="ECO:0000266"/>
    <property type="project" value="RGD"/>
</dbReference>
<dbReference type="GO" id="GO:0001701">
    <property type="term" value="P:in utero embryonic development"/>
    <property type="evidence" value="ECO:0000266"/>
    <property type="project" value="RGD"/>
</dbReference>
<dbReference type="GO" id="GO:0030216">
    <property type="term" value="P:keratinocyte differentiation"/>
    <property type="evidence" value="ECO:0000266"/>
    <property type="project" value="RGD"/>
</dbReference>
<dbReference type="GO" id="GO:0070307">
    <property type="term" value="P:lens fiber cell development"/>
    <property type="evidence" value="ECO:0000266"/>
    <property type="project" value="RGD"/>
</dbReference>
<dbReference type="GO" id="GO:0001889">
    <property type="term" value="P:liver development"/>
    <property type="evidence" value="ECO:0000266"/>
    <property type="project" value="RGD"/>
</dbReference>
<dbReference type="GO" id="GO:0060766">
    <property type="term" value="P:negative regulation of androgen receptor signaling pathway"/>
    <property type="evidence" value="ECO:0000266"/>
    <property type="project" value="RGD"/>
</dbReference>
<dbReference type="GO" id="GO:0043066">
    <property type="term" value="P:negative regulation of apoptotic process"/>
    <property type="evidence" value="ECO:0000266"/>
    <property type="project" value="RGD"/>
</dbReference>
<dbReference type="GO" id="GO:0030308">
    <property type="term" value="P:negative regulation of cell growth"/>
    <property type="evidence" value="ECO:0000266"/>
    <property type="project" value="RGD"/>
</dbReference>
<dbReference type="GO" id="GO:0045892">
    <property type="term" value="P:negative regulation of DNA-templated transcription"/>
    <property type="evidence" value="ECO:0000315"/>
    <property type="project" value="RGD"/>
</dbReference>
<dbReference type="GO" id="GO:0000122">
    <property type="term" value="P:negative regulation of transcription by RNA polymerase II"/>
    <property type="evidence" value="ECO:0000266"/>
    <property type="project" value="RGD"/>
</dbReference>
<dbReference type="GO" id="GO:0007399">
    <property type="term" value="P:nervous system development"/>
    <property type="evidence" value="ECO:0000266"/>
    <property type="project" value="RGD"/>
</dbReference>
<dbReference type="GO" id="GO:0003407">
    <property type="term" value="P:neural retina development"/>
    <property type="evidence" value="ECO:0000266"/>
    <property type="project" value="RGD"/>
</dbReference>
<dbReference type="GO" id="GO:0022008">
    <property type="term" value="P:neurogenesis"/>
    <property type="evidence" value="ECO:0000266"/>
    <property type="project" value="RGD"/>
</dbReference>
<dbReference type="GO" id="GO:0006337">
    <property type="term" value="P:nucleosome disassembly"/>
    <property type="evidence" value="ECO:0000314"/>
    <property type="project" value="RGD"/>
</dbReference>
<dbReference type="GO" id="GO:0003151">
    <property type="term" value="P:outflow tract morphogenesis"/>
    <property type="evidence" value="ECO:0000266"/>
    <property type="project" value="RGD"/>
</dbReference>
<dbReference type="GO" id="GO:0061626">
    <property type="term" value="P:pharyngeal arch artery morphogenesis"/>
    <property type="evidence" value="ECO:0000266"/>
    <property type="project" value="RGD"/>
</dbReference>
<dbReference type="GO" id="GO:0043923">
    <property type="term" value="P:positive regulation by host of viral transcription"/>
    <property type="evidence" value="ECO:0000266"/>
    <property type="project" value="RGD"/>
</dbReference>
<dbReference type="GO" id="GO:0045597">
    <property type="term" value="P:positive regulation of cell differentiation"/>
    <property type="evidence" value="ECO:0000266"/>
    <property type="project" value="RGD"/>
</dbReference>
<dbReference type="GO" id="GO:0008284">
    <property type="term" value="P:positive regulation of cell population proliferation"/>
    <property type="evidence" value="ECO:0000266"/>
    <property type="project" value="RGD"/>
</dbReference>
<dbReference type="GO" id="GO:0120162">
    <property type="term" value="P:positive regulation of cold-induced thermogenesis"/>
    <property type="evidence" value="ECO:0000266"/>
    <property type="project" value="RGD"/>
</dbReference>
<dbReference type="GO" id="GO:0045893">
    <property type="term" value="P:positive regulation of DNA-templated transcription"/>
    <property type="evidence" value="ECO:0000266"/>
    <property type="project" value="RGD"/>
</dbReference>
<dbReference type="GO" id="GO:1902661">
    <property type="term" value="P:positive regulation of glucose mediated signaling pathway"/>
    <property type="evidence" value="ECO:0000266"/>
    <property type="project" value="RGD"/>
</dbReference>
<dbReference type="GO" id="GO:1902895">
    <property type="term" value="P:positive regulation of miRNA transcription"/>
    <property type="evidence" value="ECO:0000266"/>
    <property type="project" value="RGD"/>
</dbReference>
<dbReference type="GO" id="GO:0045944">
    <property type="term" value="P:positive regulation of transcription by RNA polymerase II"/>
    <property type="evidence" value="ECO:0000250"/>
    <property type="project" value="UniProtKB"/>
</dbReference>
<dbReference type="GO" id="GO:1901838">
    <property type="term" value="P:positive regulation of transcription of nucleolar large rRNA by RNA polymerase I"/>
    <property type="evidence" value="ECO:0000266"/>
    <property type="project" value="RGD"/>
</dbReference>
<dbReference type="GO" id="GO:0030177">
    <property type="term" value="P:positive regulation of Wnt signaling pathway"/>
    <property type="evidence" value="ECO:0000266"/>
    <property type="project" value="RGD"/>
</dbReference>
<dbReference type="GO" id="GO:0060319">
    <property type="term" value="P:primitive erythrocyte differentiation"/>
    <property type="evidence" value="ECO:0000266"/>
    <property type="project" value="RGD"/>
</dbReference>
<dbReference type="GO" id="GO:0030334">
    <property type="term" value="P:regulation of cell migration"/>
    <property type="evidence" value="ECO:0000266"/>
    <property type="project" value="RGD"/>
</dbReference>
<dbReference type="GO" id="GO:0001188">
    <property type="term" value="P:RNA polymerase I preinitiation complex assembly"/>
    <property type="evidence" value="ECO:0007669"/>
    <property type="project" value="GOC"/>
</dbReference>
<dbReference type="GO" id="GO:0007286">
    <property type="term" value="P:spermatid development"/>
    <property type="evidence" value="ECO:0000270"/>
    <property type="project" value="RGD"/>
</dbReference>
<dbReference type="GO" id="GO:0019827">
    <property type="term" value="P:stem cell population maintenance"/>
    <property type="evidence" value="ECO:0000266"/>
    <property type="project" value="RGD"/>
</dbReference>
<dbReference type="GO" id="GO:0006366">
    <property type="term" value="P:transcription by RNA polymerase II"/>
    <property type="evidence" value="ECO:0000266"/>
    <property type="project" value="RGD"/>
</dbReference>
<dbReference type="GO" id="GO:0045815">
    <property type="term" value="P:transcription initiation-coupled chromatin remodeling"/>
    <property type="evidence" value="ECO:0000266"/>
    <property type="project" value="RGD"/>
</dbReference>
<dbReference type="GO" id="GO:0001570">
    <property type="term" value="P:vasculogenesis"/>
    <property type="evidence" value="ECO:0000266"/>
    <property type="project" value="RGD"/>
</dbReference>
<dbReference type="GO" id="GO:0003281">
    <property type="term" value="P:ventricular septum development"/>
    <property type="evidence" value="ECO:0000266"/>
    <property type="project" value="RGD"/>
</dbReference>
<dbReference type="CDD" id="cd05516">
    <property type="entry name" value="Bromo_SNF2L2"/>
    <property type="match status" value="1"/>
</dbReference>
<dbReference type="CDD" id="cd18062">
    <property type="entry name" value="DEXHc_SMARCA4"/>
    <property type="match status" value="1"/>
</dbReference>
<dbReference type="CDD" id="cd18793">
    <property type="entry name" value="SF2_C_SNF"/>
    <property type="match status" value="1"/>
</dbReference>
<dbReference type="FunFam" id="3.40.50.10810:FF:000008">
    <property type="entry name" value="Chromatin structure-remodeling complex subunit snf21"/>
    <property type="match status" value="1"/>
</dbReference>
<dbReference type="FunFam" id="1.20.920.10:FF:000004">
    <property type="entry name" value="probable global transcription activator SNF2L2 isoform X1"/>
    <property type="match status" value="1"/>
</dbReference>
<dbReference type="FunFam" id="3.40.5.120:FF:000001">
    <property type="entry name" value="probable global transcription activator SNF2L2 isoform X1"/>
    <property type="match status" value="1"/>
</dbReference>
<dbReference type="FunFam" id="1.20.5.170:FF:000089">
    <property type="entry name" value="Putative global transcription activator SNF2L2"/>
    <property type="match status" value="1"/>
</dbReference>
<dbReference type="FunFam" id="3.40.50.300:FF:003020">
    <property type="entry name" value="SNF2-related domain-containing protein"/>
    <property type="match status" value="1"/>
</dbReference>
<dbReference type="Gene3D" id="1.20.5.170">
    <property type="match status" value="1"/>
</dbReference>
<dbReference type="Gene3D" id="3.40.5.120">
    <property type="match status" value="1"/>
</dbReference>
<dbReference type="Gene3D" id="1.20.920.10">
    <property type="entry name" value="Bromodomain-like"/>
    <property type="match status" value="1"/>
</dbReference>
<dbReference type="Gene3D" id="3.40.50.300">
    <property type="entry name" value="P-loop containing nucleotide triphosphate hydrolases"/>
    <property type="match status" value="1"/>
</dbReference>
<dbReference type="Gene3D" id="3.40.50.10810">
    <property type="entry name" value="Tandem AAA-ATPase domain"/>
    <property type="match status" value="1"/>
</dbReference>
<dbReference type="InterPro" id="IPR030100">
    <property type="entry name" value="BRG1_ATP-bd"/>
</dbReference>
<dbReference type="InterPro" id="IPR006576">
    <property type="entry name" value="BRK_domain"/>
</dbReference>
<dbReference type="InterPro" id="IPR037259">
    <property type="entry name" value="BRK_sf"/>
</dbReference>
<dbReference type="InterPro" id="IPR001487">
    <property type="entry name" value="Bromodomain"/>
</dbReference>
<dbReference type="InterPro" id="IPR036427">
    <property type="entry name" value="Bromodomain-like_sf"/>
</dbReference>
<dbReference type="InterPro" id="IPR018359">
    <property type="entry name" value="Bromodomain_CS"/>
</dbReference>
<dbReference type="InterPro" id="IPR014978">
    <property type="entry name" value="Gln-Leu-Gln_QLQ"/>
</dbReference>
<dbReference type="InterPro" id="IPR014001">
    <property type="entry name" value="Helicase_ATP-bd"/>
</dbReference>
<dbReference type="InterPro" id="IPR001650">
    <property type="entry name" value="Helicase_C-like"/>
</dbReference>
<dbReference type="InterPro" id="IPR014012">
    <property type="entry name" value="HSA_dom"/>
</dbReference>
<dbReference type="InterPro" id="IPR027417">
    <property type="entry name" value="P-loop_NTPase"/>
</dbReference>
<dbReference type="InterPro" id="IPR029295">
    <property type="entry name" value="SnAC"/>
</dbReference>
<dbReference type="InterPro" id="IPR038718">
    <property type="entry name" value="SNF2-like_sf"/>
</dbReference>
<dbReference type="InterPro" id="IPR049730">
    <property type="entry name" value="SNF2/RAD54-like_C"/>
</dbReference>
<dbReference type="InterPro" id="IPR000330">
    <property type="entry name" value="SNF2_N"/>
</dbReference>
<dbReference type="PANTHER" id="PTHR10799">
    <property type="entry name" value="SNF2/RAD54 HELICASE FAMILY"/>
    <property type="match status" value="1"/>
</dbReference>
<dbReference type="Pfam" id="PF07533">
    <property type="entry name" value="BRK"/>
    <property type="match status" value="1"/>
</dbReference>
<dbReference type="Pfam" id="PF00439">
    <property type="entry name" value="Bromodomain"/>
    <property type="match status" value="1"/>
</dbReference>
<dbReference type="Pfam" id="PF00271">
    <property type="entry name" value="Helicase_C"/>
    <property type="match status" value="1"/>
</dbReference>
<dbReference type="Pfam" id="PF07529">
    <property type="entry name" value="HSA"/>
    <property type="match status" value="1"/>
</dbReference>
<dbReference type="Pfam" id="PF08880">
    <property type="entry name" value="QLQ"/>
    <property type="match status" value="1"/>
</dbReference>
<dbReference type="Pfam" id="PF14619">
    <property type="entry name" value="SnAC"/>
    <property type="match status" value="1"/>
</dbReference>
<dbReference type="Pfam" id="PF00176">
    <property type="entry name" value="SNF2-rel_dom"/>
    <property type="match status" value="1"/>
</dbReference>
<dbReference type="PRINTS" id="PR00503">
    <property type="entry name" value="BROMODOMAIN"/>
</dbReference>
<dbReference type="SMART" id="SM00592">
    <property type="entry name" value="BRK"/>
    <property type="match status" value="1"/>
</dbReference>
<dbReference type="SMART" id="SM00297">
    <property type="entry name" value="BROMO"/>
    <property type="match status" value="1"/>
</dbReference>
<dbReference type="SMART" id="SM00487">
    <property type="entry name" value="DEXDc"/>
    <property type="match status" value="1"/>
</dbReference>
<dbReference type="SMART" id="SM00490">
    <property type="entry name" value="HELICc"/>
    <property type="match status" value="1"/>
</dbReference>
<dbReference type="SMART" id="SM00573">
    <property type="entry name" value="HSA"/>
    <property type="match status" value="1"/>
</dbReference>
<dbReference type="SMART" id="SM00951">
    <property type="entry name" value="QLQ"/>
    <property type="match status" value="1"/>
</dbReference>
<dbReference type="SMART" id="SM01314">
    <property type="entry name" value="SnAC"/>
    <property type="match status" value="1"/>
</dbReference>
<dbReference type="SUPFAM" id="SSF160481">
    <property type="entry name" value="BRK domain-like"/>
    <property type="match status" value="1"/>
</dbReference>
<dbReference type="SUPFAM" id="SSF47370">
    <property type="entry name" value="Bromodomain"/>
    <property type="match status" value="1"/>
</dbReference>
<dbReference type="SUPFAM" id="SSF52540">
    <property type="entry name" value="P-loop containing nucleoside triphosphate hydrolases"/>
    <property type="match status" value="2"/>
</dbReference>
<dbReference type="PROSITE" id="PS00633">
    <property type="entry name" value="BROMODOMAIN_1"/>
    <property type="match status" value="1"/>
</dbReference>
<dbReference type="PROSITE" id="PS50014">
    <property type="entry name" value="BROMODOMAIN_2"/>
    <property type="match status" value="1"/>
</dbReference>
<dbReference type="PROSITE" id="PS51192">
    <property type="entry name" value="HELICASE_ATP_BIND_1"/>
    <property type="match status" value="1"/>
</dbReference>
<dbReference type="PROSITE" id="PS51194">
    <property type="entry name" value="HELICASE_CTER"/>
    <property type="match status" value="1"/>
</dbReference>
<dbReference type="PROSITE" id="PS51204">
    <property type="entry name" value="HSA"/>
    <property type="match status" value="1"/>
</dbReference>
<dbReference type="PROSITE" id="PS51666">
    <property type="entry name" value="QLQ"/>
    <property type="match status" value="1"/>
</dbReference>
<evidence type="ECO:0000250" key="1"/>
<evidence type="ECO:0000250" key="2">
    <source>
        <dbReference type="UniProtKB" id="P51532"/>
    </source>
</evidence>
<evidence type="ECO:0000250" key="3">
    <source>
        <dbReference type="UniProtKB" id="Q3TKT4"/>
    </source>
</evidence>
<evidence type="ECO:0000250" key="4">
    <source>
        <dbReference type="UniProtKB" id="Q6DIC0"/>
    </source>
</evidence>
<evidence type="ECO:0000255" key="5">
    <source>
        <dbReference type="PROSITE-ProRule" id="PRU00035"/>
    </source>
</evidence>
<evidence type="ECO:0000255" key="6">
    <source>
        <dbReference type="PROSITE-ProRule" id="PRU00541"/>
    </source>
</evidence>
<evidence type="ECO:0000255" key="7">
    <source>
        <dbReference type="PROSITE-ProRule" id="PRU00542"/>
    </source>
</evidence>
<evidence type="ECO:0000255" key="8">
    <source>
        <dbReference type="PROSITE-ProRule" id="PRU00549"/>
    </source>
</evidence>
<evidence type="ECO:0000255" key="9">
    <source>
        <dbReference type="PROSITE-ProRule" id="PRU01001"/>
    </source>
</evidence>
<evidence type="ECO:0000256" key="10">
    <source>
        <dbReference type="SAM" id="MobiDB-lite"/>
    </source>
</evidence>
<evidence type="ECO:0000269" key="11">
    <source>
    </source>
</evidence>
<evidence type="ECO:0000303" key="12">
    <source>
    </source>
</evidence>
<evidence type="ECO:0000303" key="13">
    <source ref="1"/>
</evidence>
<evidence type="ECO:0000305" key="14"/>
<evidence type="ECO:0007744" key="15">
    <source>
    </source>
</evidence>
<comment type="function">
    <text evidence="2 3 11">ATPase involved in transcriptional activation and repression of select genes by chromatin remodeling (alteration of DNA-nucleosome topology). Component of SWI/SNF chromatin remodeling complexes that carry out key enzymatic activities, changing chromatin structure by altering DNA-histone contacts within a nucleosome in an ATP-dependent manner (PubMed:19081374). Component of the CREST-BRG1 complex, a multiprotein complex that regulates promoter activation by orchestrating the calcium-dependent release of a repressor complex and the recruitment of an activator complex. In resting neurons, transcription of the c-FOS promoter is inhibited by SMARCA4-dependent recruitment of a phospho-RB1-HDAC repressor complex. Upon calcium influx, RB1 is dephosphorylated by calcineurin, which leads to release of the repressor complex. At the same time, there is increased recruitment of CREBBP to the promoter by a CREST-dependent mechanism, which leads to transcriptional activation. The CREST-BRG1 complex also binds to the NR2B promoter, and activity-dependent induction of NR2B expression involves the release of HDAC1 and recruitment of CREBBP (PubMed:19081374). Belongs to the neural progenitors-specific chromatin remodeling complex (npBAF complex) and the neuron-specific chromatin remodeling complex (nBAF complex). During neural development, a switch from a stem/progenitor to a postmitotic chromatin remodeling mechanism occurs as neurons exit the cell cycle and become committed to their adult state. The transition from proliferating neural stem/progenitor cells to postmitotic neurons requires a switch in subunit composition of the npBAF and nBAF complexes. As neural progenitors exit mitosis and differentiate into neurons, npBAF complexes which contain ACTL6A/BAF53A and PHF10/BAF45A, are exchanged for homologous alternative ACTL6B/BAF53B and DPF1/BAF45B or DPF3/BAF45C subunits in neuron-specific complexes (nBAF). The npBAF complex is essential for the self-renewal/proliferative capacity of the multipotent neural stem cells. The nBAF complex along with CREST plays a role regulating the activity of genes essential for dendrite growth. SMARCA4/BAF190A may promote neural stem cell self-renewal/proliferation by enhancing Notch-dependent proliferative signals, while concurrently making the neural stem cell insensitive to SHH-dependent differentiating cues. Acts as a corepressor of ZEB1 to regulate E-cadherin transcription and is required for induction of epithelial-mesenchymal transition (EMT) by ZEB1 (By similarity). Binds via DLX1 to enhancers located in the intergenic region between DLX5 and DLX6 and this binding is stabilized by the long non-coding RNA (lncRNA) Evf2 (By similarity). Binds to RNA in a promiscuous manner (By similarity). Binding to RNAs including lncRNA Evf2 leads to inhibition of SMARCA4 ATPase and chromatin remodeling activities (By similarity).</text>
</comment>
<comment type="catalytic activity">
    <reaction evidence="2">
        <text>ATP + H2O = ADP + phosphate + H(+)</text>
        <dbReference type="Rhea" id="RHEA:13065"/>
        <dbReference type="ChEBI" id="CHEBI:15377"/>
        <dbReference type="ChEBI" id="CHEBI:15378"/>
        <dbReference type="ChEBI" id="CHEBI:30616"/>
        <dbReference type="ChEBI" id="CHEBI:43474"/>
        <dbReference type="ChEBI" id="CHEBI:456216"/>
    </reaction>
    <physiologicalReaction direction="left-to-right" evidence="2">
        <dbReference type="Rhea" id="RHEA:13066"/>
    </physiologicalReaction>
</comment>
<comment type="activity regulation">
    <text evidence="3">Binding to RNAs including lncRNA Evf2 leads to inhibition of SMARCA4 ATPase and chromatin remodeling activities.</text>
</comment>
<comment type="subunit">
    <text evidence="2 3">Component of the multiprotein chromatin-remodeling complexes SWI/SNF: SWI/SNF-A (BAF), SWI/SNF-B (PBAF) and related complexes. The canonical complex contains a catalytic subunit (either SMARCA4/BRG1/BAF190A or SMARCA2/BRM/BAF190B) and at least SMARCE1, ACTL6A/BAF53, SMARCC1/BAF155, SMARCC2/BAF170, and SMARCB1/SNF5/BAF47. Other subunits specific to each of the complexes may also be present permitting several possible developmental- and tissue-specific combinations. Component of the BAF complex, which includes at least actin (ACTB), ARID1A/BAF250A, ARID1B/BAF250B, SMARCA2/BRM, SMARCA4/BRG1/BAF190A, ACTL6A/BAF53, ACTL6B/BAF53B, SMARCE1/BAF57, SMARCC1/BAF155, SMARCC2/BAF170, SMARCB1/SNF5/INI1, and one or more SMARCD1/BAF60A, SMARCD2/BAF60B, or SMARCD3/BAF60C. In muscle cells, the BAF complex also contains DPF3. Component of neural progenitors-specific chromatin remodeling complex (npBAF complex) composed of at least, ARID1A/BAF250A or ARID1B/BAF250B, SMARCD1/BAF60A, SMARCD3/BAF60C, SMARCA2/BRM/BAF190B, SMARCA4/BRG1/BAF190A, SMARCB1/BAF47, SMARCC1/BAF155, SMARCE1/BAF57, SMARCC2/BAF170, PHF10/BAF45A, ACTL6A/BAF53A and actin. Component of neuron-specific chromatin remodeling complex (nBAF complex) composed of at least, ARID1A/BAF250A or ARID1B/BAF250B, SMARCD1/BAF60A, SMARCD3/BAF60C, SMARCA2/BRM/BAF190B, SMARCA4/BRG1/BAF190A, SMARCB1/BAF47, SMARCC1/BAF155, SMARCE1/BAF57, SMARCC2/BAF170, DPF1/BAF45B, DPF3/BAF45C, ACTL6B/BAF53B and actin. Component of the SWI/SNF-B (PBAF) chromatin remodeling complex, at least composed of SMARCA4/BRG1, SMARCB1/BAF47/SNF5, ACTL6A/BAF53A or ACTL6B/BAF53B, SMARCE1/BAF57, SMARCD1/BAF60A, SMARCD2/BAF60B, perhaps SMARCD3/BAF60C, SMARCC1/BAF155, SMARCC2/BAF170, PBRM1/BAF180, ARID2/BAF200 and actin. Component of SWI/SNF (GBAF) subcomplex, which includes at least BICRA or BICRAL (mutually exclusive), BRD9, SS18, SMARCA2/BRM, SMARCA4/BRG1/BAF190A, ACTL6A/BAF53, SMARCC1/BAF155, and SMARCD1/BAF60A. Component of the BAF53 complex, at least composed of BAF53A, RUVBL1, SMARCA4/BRG1/BAF190A, and TRRAP, which preferentially acetylates histone H4 (and H2A) within nucleosomes (By similarity). Component of the CREST-BRG1 complex, at least composed of SMARCA4/BRG1/BAF190A, SS18L1/CREST, HDAC1, RB1 and SP1 (By similarity). Interacts with PHF10/BAF45A (By similarity). Interacts with MYOG (By similarity). Interacts directly with IKFZ1; the interaction associates IKFZ1 with the BAF complex. Interacts with ZEB1 (via N-terminus). Interacts with NR3C1, PGR, SMARD1, TOPBP1 and ZMIM2/ZIMP7. Interacts with (via the bromodomain) with TERT; the interaction regulates Wnt-mediated signaling (By similarity). Interacts with TBX21 in a KDM6B-dependent manner (By similarity). Interacts with KDM6A and KDM6B (By similarity). Interacts with HNRNPU; this interaction occurs in embryonic stem cells and stimulates global Pol II-mediated transcription (By similarity). Interacts with ACTL6A (By similarity). Interacts with DLX1 (By similarity). Interacts with DPF2. Interacts with DPF3a (isoform 2 of DPF3/BAF45C) and with HDGFL2 in a DPF3a-dependent manner. May interact with ADNP2 (By similarity). Interacts with LETMD1 (via C-terminal); the interaction regulates transcriptional expression of thermogenic genes in brown adipose tissue (By similarity). Interacts (via KIKL motif) with BRD3 (via NET domain) (By similarity).</text>
</comment>
<comment type="interaction">
    <interactant intactId="EBI-689301">
        <id>Q8K1P7</id>
    </interactant>
    <interactant intactId="EBI-6676662">
        <id>G3V612</id>
        <label>Olig2</label>
    </interactant>
    <organismsDiffer>false</organismsDiffer>
    <experiments>2</experiments>
</comment>
<comment type="interaction">
    <interactant intactId="EBI-689301">
        <id>Q8K1P7</id>
    </interactant>
    <interactant intactId="EBI-689316">
        <id>Q4KLI0</id>
        <label>Smarcb1</label>
    </interactant>
    <organismsDiffer>false</organismsDiffer>
    <experiments>2</experiments>
</comment>
<comment type="interaction">
    <interactant intactId="EBI-689301">
        <id>Q8K1P7</id>
    </interactant>
    <interactant intactId="EBI-358419">
        <id>Q12824</id>
        <label>SMARCB1</label>
    </interactant>
    <organismsDiffer>true</organismsDiffer>
    <experiments>2</experiments>
</comment>
<comment type="subcellular location">
    <subcellularLocation>
        <location evidence="3">Nucleus</location>
    </subcellularLocation>
    <text evidence="2 3">Colocalizes with long non-coding RNA Evf2 in nuclear RNA clouds (By similarity). Localizes to sites of DNA damage (By similarity).</text>
</comment>
<comment type="domain">
    <text evidence="2">The KIKL motif recognizes and binds the NET domain of BRD3.</text>
</comment>
<comment type="similarity">
    <text evidence="14">Belongs to the SNF2/RAD54 helicase family.</text>
</comment>
<gene>
    <name type="primary">Smarca4</name>
    <name type="synonym">Baf190a</name>
    <name type="synonym">Brg1</name>
    <name type="synonym">Snf2b</name>
    <name type="synonym">Snf2l4</name>
</gene>
<accession>Q8K1P7</accession>